<feature type="chain" id="PRO_0000071500" description="Protein phosphatase 1 regulatory subunit 3A">
    <location>
        <begin position="1"/>
        <end position="1122"/>
    </location>
</feature>
<feature type="transmembrane region" description="Helical" evidence="4">
    <location>
        <begin position="1078"/>
        <end position="1098"/>
    </location>
</feature>
<feature type="domain" description="CBM21" evidence="5">
    <location>
        <begin position="122"/>
        <end position="230"/>
    </location>
</feature>
<feature type="region of interest" description="Disordered" evidence="6">
    <location>
        <begin position="32"/>
        <end position="58"/>
    </location>
</feature>
<feature type="region of interest" description="Disordered" evidence="6">
    <location>
        <begin position="332"/>
        <end position="351"/>
    </location>
</feature>
<feature type="region of interest" description="Disordered" evidence="6">
    <location>
        <begin position="395"/>
        <end position="422"/>
    </location>
</feature>
<feature type="region of interest" description="Disordered" evidence="6">
    <location>
        <begin position="496"/>
        <end position="516"/>
    </location>
</feature>
<feature type="region of interest" description="Disordered" evidence="6">
    <location>
        <begin position="640"/>
        <end position="668"/>
    </location>
</feature>
<feature type="region of interest" description="Disordered" evidence="6">
    <location>
        <begin position="963"/>
        <end position="983"/>
    </location>
</feature>
<feature type="region of interest" description="Disordered" evidence="6">
    <location>
        <begin position="1025"/>
        <end position="1058"/>
    </location>
</feature>
<feature type="short sequence motif" description="PP1-binding motif">
    <location>
        <begin position="62"/>
        <end position="65"/>
    </location>
</feature>
<feature type="compositionally biased region" description="Basic and acidic residues" evidence="6">
    <location>
        <begin position="395"/>
        <end position="405"/>
    </location>
</feature>
<feature type="compositionally biased region" description="Basic and acidic residues" evidence="6">
    <location>
        <begin position="499"/>
        <end position="516"/>
    </location>
</feature>
<feature type="compositionally biased region" description="Polar residues" evidence="6">
    <location>
        <begin position="640"/>
        <end position="662"/>
    </location>
</feature>
<feature type="compositionally biased region" description="Basic and acidic residues" evidence="6">
    <location>
        <begin position="963"/>
        <end position="977"/>
    </location>
</feature>
<feature type="compositionally biased region" description="Polar residues" evidence="6">
    <location>
        <begin position="1031"/>
        <end position="1040"/>
    </location>
</feature>
<feature type="compositionally biased region" description="Polar residues" evidence="6">
    <location>
        <begin position="1048"/>
        <end position="1058"/>
    </location>
</feature>
<feature type="modified residue" description="Phosphoserine; by GSK3" evidence="2">
    <location>
        <position position="38"/>
    </location>
</feature>
<feature type="modified residue" description="Phosphoserine; by GSK3" evidence="2">
    <location>
        <position position="42"/>
    </location>
</feature>
<feature type="modified residue" description="Phosphoserine; by PKA and ISPK" evidence="2">
    <location>
        <position position="46"/>
    </location>
</feature>
<feature type="modified residue" description="Phosphoserine" evidence="3">
    <location>
        <position position="49"/>
    </location>
</feature>
<feature type="modified residue" description="Phosphothreonine" evidence="3">
    <location>
        <position position="56"/>
    </location>
</feature>
<feature type="modified residue" description="Phosphoserine; by PKA" evidence="2">
    <location>
        <position position="65"/>
    </location>
</feature>
<feature type="modified residue" description="Phosphoserine" evidence="3">
    <location>
        <position position="844"/>
    </location>
</feature>
<feature type="splice variant" id="VSP_011585" description="In isoform 2." evidence="13">
    <original>GTRRVSFADSFGFNL</original>
    <variation>ERTRAGACKTMERSS</variation>
    <location>
        <begin position="60"/>
        <end position="74"/>
    </location>
</feature>
<feature type="splice variant" id="VSP_011586" description="In isoform 2." evidence="13">
    <location>
        <begin position="75"/>
        <end position="1122"/>
    </location>
</feature>
<feature type="sequence variant" id="VAR_027929" description="In dbSNP:rs8192687.">
    <original>G</original>
    <variation>S</variation>
    <location>
        <position position="45"/>
    </location>
</feature>
<feature type="sequence variant" id="VAR_027930" description="In dbSNP:rs7801819.">
    <original>C</original>
    <variation>Y</variation>
    <location>
        <position position="231"/>
    </location>
</feature>
<feature type="sequence variant" id="VAR_027931" description="In dbSNP:rs2974942." evidence="7 8 11 12">
    <original>V</original>
    <variation>M</variation>
    <location>
        <position position="451"/>
    </location>
</feature>
<feature type="sequence variant" id="VAR_027932" description="In dbSNP:rs2974944." evidence="7 8 11 12">
    <original>N</original>
    <variation>K</variation>
    <location>
        <position position="476"/>
    </location>
</feature>
<feature type="sequence variant" id="VAR_036287" description="In a breast cancer sample; somatic mutation." evidence="9">
    <original>G</original>
    <variation>A</variation>
    <location>
        <position position="554"/>
    </location>
</feature>
<feature type="sequence variant" id="VAR_057128" description="In dbSNP:rs35067467.">
    <original>R</original>
    <variation>K</variation>
    <location>
        <position position="627"/>
    </location>
</feature>
<feature type="sequence variant" id="VAR_027933" description="In dbSNP:rs4304271.">
    <original>E</original>
    <variation>K</variation>
    <location>
        <position position="748"/>
    </location>
</feature>
<feature type="sequence variant" id="VAR_027934" description="In dbSNP:rs2974938." evidence="7 8 11 12">
    <original>L</original>
    <variation>H</variation>
    <location>
        <position position="882"/>
    </location>
</feature>
<feature type="sequence variant" id="VAR_019697" description="In dbSNP:rs1800000." evidence="12">
    <original>R</original>
    <variation>S</variation>
    <location>
        <position position="883"/>
    </location>
</feature>
<feature type="sequence variant" id="VAR_019698" description="Probable risk factor for insulin resistance; dbSNP:rs1799999." evidence="10 12">
    <original>D</original>
    <variation>Y</variation>
    <location>
        <position position="905"/>
    </location>
</feature>
<feature type="sequence variant" id="VAR_019699" description="In T2D; dbSNP:rs35449651." evidence="11">
    <original>A</original>
    <variation>E</variation>
    <location>
        <position position="931"/>
    </location>
</feature>
<feature type="turn" evidence="15">
    <location>
        <begin position="67"/>
        <end position="71"/>
    </location>
</feature>
<feature type="strand" evidence="15">
    <location>
        <begin position="74"/>
        <end position="80"/>
    </location>
</feature>
<keyword id="KW-0002">3D-structure</keyword>
<keyword id="KW-0025">Alternative splicing</keyword>
<keyword id="KW-0119">Carbohydrate metabolism</keyword>
<keyword id="KW-0219">Diabetes mellitus</keyword>
<keyword id="KW-0225">Disease variant</keyword>
<keyword id="KW-0321">Glycogen metabolism</keyword>
<keyword id="KW-0472">Membrane</keyword>
<keyword id="KW-0597">Phosphoprotein</keyword>
<keyword id="KW-1267">Proteomics identification</keyword>
<keyword id="KW-1185">Reference proteome</keyword>
<keyword id="KW-0812">Transmembrane</keyword>
<keyword id="KW-1133">Transmembrane helix</keyword>
<reference key="1">
    <citation type="journal article" date="1998" name="Diabetes">
        <title>A common variant in PPP1R3 associated with insulin resistance and type 2 diabetes.</title>
        <authorList>
            <person name="Xia J."/>
            <person name="Scherer S.W."/>
            <person name="Cohen P.T.W."/>
            <person name="Majer M."/>
            <person name="Xi T."/>
            <person name="Norman R.A."/>
            <person name="Knowler W.C."/>
            <person name="Bogardus C."/>
            <person name="Prochazka M."/>
        </authorList>
    </citation>
    <scope>NUCLEOTIDE SEQUENCE [GENOMIC DNA / MRNA] (ISOFORMS 1 AND 2)</scope>
    <scope>TISSUE SPECIFICITY</scope>
    <scope>VARIANTS MET-451; LYS-476; HIS-882; SER-883 AND TYR-905</scope>
    <source>
        <tissue>Skeletal muscle</tissue>
    </source>
</reference>
<reference key="2">
    <citation type="journal article" date="2003" name="Nature">
        <title>The DNA sequence of human chromosome 7.</title>
        <authorList>
            <person name="Hillier L.W."/>
            <person name="Fulton R.S."/>
            <person name="Fulton L.A."/>
            <person name="Graves T.A."/>
            <person name="Pepin K.H."/>
            <person name="Wagner-McPherson C."/>
            <person name="Layman D."/>
            <person name="Maas J."/>
            <person name="Jaeger S."/>
            <person name="Walker R."/>
            <person name="Wylie K."/>
            <person name="Sekhon M."/>
            <person name="Becker M.C."/>
            <person name="O'Laughlin M.D."/>
            <person name="Schaller M.E."/>
            <person name="Fewell G.A."/>
            <person name="Delehaunty K.D."/>
            <person name="Miner T.L."/>
            <person name="Nash W.E."/>
            <person name="Cordes M."/>
            <person name="Du H."/>
            <person name="Sun H."/>
            <person name="Edwards J."/>
            <person name="Bradshaw-Cordum H."/>
            <person name="Ali J."/>
            <person name="Andrews S."/>
            <person name="Isak A."/>
            <person name="Vanbrunt A."/>
            <person name="Nguyen C."/>
            <person name="Du F."/>
            <person name="Lamar B."/>
            <person name="Courtney L."/>
            <person name="Kalicki J."/>
            <person name="Ozersky P."/>
            <person name="Bielicki L."/>
            <person name="Scott K."/>
            <person name="Holmes A."/>
            <person name="Harkins R."/>
            <person name="Harris A."/>
            <person name="Strong C.M."/>
            <person name="Hou S."/>
            <person name="Tomlinson C."/>
            <person name="Dauphin-Kohlberg S."/>
            <person name="Kozlowicz-Reilly A."/>
            <person name="Leonard S."/>
            <person name="Rohlfing T."/>
            <person name="Rock S.M."/>
            <person name="Tin-Wollam A.-M."/>
            <person name="Abbott A."/>
            <person name="Minx P."/>
            <person name="Maupin R."/>
            <person name="Strowmatt C."/>
            <person name="Latreille P."/>
            <person name="Miller N."/>
            <person name="Johnson D."/>
            <person name="Murray J."/>
            <person name="Woessner J.P."/>
            <person name="Wendl M.C."/>
            <person name="Yang S.-P."/>
            <person name="Schultz B.R."/>
            <person name="Wallis J.W."/>
            <person name="Spieth J."/>
            <person name="Bieri T.A."/>
            <person name="Nelson J.O."/>
            <person name="Berkowicz N."/>
            <person name="Wohldmann P.E."/>
            <person name="Cook L.L."/>
            <person name="Hickenbotham M.T."/>
            <person name="Eldred J."/>
            <person name="Williams D."/>
            <person name="Bedell J.A."/>
            <person name="Mardis E.R."/>
            <person name="Clifton S.W."/>
            <person name="Chissoe S.L."/>
            <person name="Marra M.A."/>
            <person name="Raymond C."/>
            <person name="Haugen E."/>
            <person name="Gillett W."/>
            <person name="Zhou Y."/>
            <person name="James R."/>
            <person name="Phelps K."/>
            <person name="Iadanoto S."/>
            <person name="Bubb K."/>
            <person name="Simms E."/>
            <person name="Levy R."/>
            <person name="Clendenning J."/>
            <person name="Kaul R."/>
            <person name="Kent W.J."/>
            <person name="Furey T.S."/>
            <person name="Baertsch R.A."/>
            <person name="Brent M.R."/>
            <person name="Keibler E."/>
            <person name="Flicek P."/>
            <person name="Bork P."/>
            <person name="Suyama M."/>
            <person name="Bailey J.A."/>
            <person name="Portnoy M.E."/>
            <person name="Torrents D."/>
            <person name="Chinwalla A.T."/>
            <person name="Gish W.R."/>
            <person name="Eddy S.R."/>
            <person name="McPherson J.D."/>
            <person name="Olson M.V."/>
            <person name="Eichler E.E."/>
            <person name="Green E.D."/>
            <person name="Waterston R.H."/>
            <person name="Wilson R.K."/>
        </authorList>
    </citation>
    <scope>NUCLEOTIDE SEQUENCE [LARGE SCALE GENOMIC DNA]</scope>
</reference>
<reference key="3">
    <citation type="journal article" date="2003" name="Science">
        <title>Human chromosome 7: DNA sequence and biology.</title>
        <authorList>
            <person name="Scherer S.W."/>
            <person name="Cheung J."/>
            <person name="MacDonald J.R."/>
            <person name="Osborne L.R."/>
            <person name="Nakabayashi K."/>
            <person name="Herbrick J.-A."/>
            <person name="Carson A.R."/>
            <person name="Parker-Katiraee L."/>
            <person name="Skaug J."/>
            <person name="Khaja R."/>
            <person name="Zhang J."/>
            <person name="Hudek A.K."/>
            <person name="Li M."/>
            <person name="Haddad M."/>
            <person name="Duggan G.E."/>
            <person name="Fernandez B.A."/>
            <person name="Kanematsu E."/>
            <person name="Gentles S."/>
            <person name="Christopoulos C.C."/>
            <person name="Choufani S."/>
            <person name="Kwasnicka D."/>
            <person name="Zheng X.H."/>
            <person name="Lai Z."/>
            <person name="Nusskern D.R."/>
            <person name="Zhang Q."/>
            <person name="Gu Z."/>
            <person name="Lu F."/>
            <person name="Zeesman S."/>
            <person name="Nowaczyk M.J."/>
            <person name="Teshima I."/>
            <person name="Chitayat D."/>
            <person name="Shuman C."/>
            <person name="Weksberg R."/>
            <person name="Zackai E.H."/>
            <person name="Grebe T.A."/>
            <person name="Cox S.R."/>
            <person name="Kirkpatrick S.J."/>
            <person name="Rahman N."/>
            <person name="Friedman J.M."/>
            <person name="Heng H.H.Q."/>
            <person name="Pelicci P.G."/>
            <person name="Lo-Coco F."/>
            <person name="Belloni E."/>
            <person name="Shaffer L.G."/>
            <person name="Pober B."/>
            <person name="Morton C.C."/>
            <person name="Gusella J.F."/>
            <person name="Bruns G.A.P."/>
            <person name="Korf B.R."/>
            <person name="Quade B.J."/>
            <person name="Ligon A.H."/>
            <person name="Ferguson H."/>
            <person name="Higgins A.W."/>
            <person name="Leach N.T."/>
            <person name="Herrick S.R."/>
            <person name="Lemyre E."/>
            <person name="Farra C.G."/>
            <person name="Kim H.-G."/>
            <person name="Summers A.M."/>
            <person name="Gripp K.W."/>
            <person name="Roberts W."/>
            <person name="Szatmari P."/>
            <person name="Winsor E.J.T."/>
            <person name="Grzeschik K.-H."/>
            <person name="Teebi A."/>
            <person name="Minassian B.A."/>
            <person name="Kere J."/>
            <person name="Armengol L."/>
            <person name="Pujana M.A."/>
            <person name="Estivill X."/>
            <person name="Wilson M.D."/>
            <person name="Koop B.F."/>
            <person name="Tosi S."/>
            <person name="Moore G.E."/>
            <person name="Boright A.P."/>
            <person name="Zlotorynski E."/>
            <person name="Kerem B."/>
            <person name="Kroisel P.M."/>
            <person name="Petek E."/>
            <person name="Oscier D.G."/>
            <person name="Mould S.J."/>
            <person name="Doehner H."/>
            <person name="Doehner K."/>
            <person name="Rommens J.M."/>
            <person name="Vincent J.B."/>
            <person name="Venter J.C."/>
            <person name="Li P.W."/>
            <person name="Mural R.J."/>
            <person name="Adams M.D."/>
            <person name="Tsui L.-C."/>
        </authorList>
    </citation>
    <scope>NUCLEOTIDE SEQUENCE [LARGE SCALE GENOMIC DNA]</scope>
    <scope>VARIANTS MET-451; LYS-476 AND HIS-882</scope>
</reference>
<reference key="4">
    <citation type="journal article" date="2004" name="Genome Res.">
        <title>The status, quality, and expansion of the NIH full-length cDNA project: the Mammalian Gene Collection (MGC).</title>
        <authorList>
            <consortium name="The MGC Project Team"/>
        </authorList>
    </citation>
    <scope>NUCLEOTIDE SEQUENCE [LARGE SCALE MRNA] (ISOFORM 1)</scope>
    <scope>VARIANTS MET-451; LYS-476 AND HIS-882</scope>
</reference>
<reference key="5">
    <citation type="journal article" date="1994" name="Diabetes">
        <title>Sequence of the human glycogen-associated regulatory subunit of type I protein phosphatase and analysis of its coding region and mRNA level in muscle from patients with non-insulin-dependent diabetes.</title>
        <authorList>
            <person name="Chen Y.H."/>
            <person name="Hansen L."/>
            <person name="Chen M.X."/>
            <person name="Bjorbaek C."/>
            <person name="Vestergaard H."/>
            <person name="Hansen T."/>
            <person name="Cohen P.T.W."/>
            <person name="Pederson O."/>
        </authorList>
    </citation>
    <scope>NUCLEOTIDE SEQUENCE [MRNA] OF 2-1122 (ISOFORM 1)</scope>
    <scope>VARIANTS MET-451; LYS-476 AND HIS-882</scope>
    <scope>VARIANT T2D GLU-931</scope>
    <source>
        <tissue>Skeletal muscle</tissue>
    </source>
</reference>
<reference key="6">
    <citation type="journal article" date="1995" name="Hum. Mol. Genet.">
        <title>A widespread amino acid polymorphism at codon 905 of the glycogen-associated regulatory subunit of protein phosphatase-1 is associated with insulin resistance and hypersecretion of insulin.</title>
        <authorList>
            <person name="Hansen L."/>
            <person name="Hansen T."/>
            <person name="Vestergaard H."/>
            <person name="Bjorbaek C."/>
            <person name="Echwald S.M."/>
            <person name="Clausen J.O."/>
            <person name="Chen Y.H."/>
            <person name="Chen M.X."/>
            <person name="Cohen P.T.W."/>
            <person name="Pedersen O."/>
        </authorList>
    </citation>
    <scope>VARIANT TYR-905</scope>
</reference>
<reference key="7">
    <citation type="journal article" date="2006" name="Science">
        <title>The consensus coding sequences of human breast and colorectal cancers.</title>
        <authorList>
            <person name="Sjoeblom T."/>
            <person name="Jones S."/>
            <person name="Wood L.D."/>
            <person name="Parsons D.W."/>
            <person name="Lin J."/>
            <person name="Barber T.D."/>
            <person name="Mandelker D."/>
            <person name="Leary R.J."/>
            <person name="Ptak J."/>
            <person name="Silliman N."/>
            <person name="Szabo S."/>
            <person name="Buckhaults P."/>
            <person name="Farrell C."/>
            <person name="Meeh P."/>
            <person name="Markowitz S.D."/>
            <person name="Willis J."/>
            <person name="Dawson D."/>
            <person name="Willson J.K.V."/>
            <person name="Gazdar A.F."/>
            <person name="Hartigan J."/>
            <person name="Wu L."/>
            <person name="Liu C."/>
            <person name="Parmigiani G."/>
            <person name="Park B.H."/>
            <person name="Bachman K.E."/>
            <person name="Papadopoulos N."/>
            <person name="Vogelstein B."/>
            <person name="Kinzler K.W."/>
            <person name="Velculescu V.E."/>
        </authorList>
    </citation>
    <scope>VARIANT [LARGE SCALE ANALYSIS] ALA-554</scope>
</reference>
<name>PPR3A_HUMAN</name>
<accession>Q16821</accession>
<accession>A0AVQ2</accession>
<accession>A4D0T6</accession>
<accession>O43476</accession>
<accession>Q75LN8</accession>
<accession>Q7KYM8</accession>
<accession>Q86UI6</accession>
<comment type="function">
    <text evidence="1">Seems to act as a glycogen-targeting subunit for PP1. PP1 is essential for cell division, and participates in the regulation of glycogen metabolism, muscle contractility and protein synthesis. Plays an important role in glycogen synthesis but is not essential for insulin activation of glycogen synthase (By similarity).</text>
</comment>
<comment type="subunit">
    <text evidence="1">Interacts with PPP1CC catalytic subunit of PP1, and associates with glycogen.</text>
</comment>
<comment type="subcellular location">
    <subcellularLocation>
        <location evidence="1">Membrane</location>
        <topology evidence="1">Single-pass membrane protein</topology>
    </subcellularLocation>
</comment>
<comment type="alternative products">
    <event type="alternative splicing"/>
    <isoform>
        <id>Q16821-1</id>
        <name>1</name>
        <sequence type="displayed"/>
    </isoform>
    <isoform>
        <id>Q16821-2</id>
        <name>2</name>
        <sequence type="described" ref="VSP_011585 VSP_011586"/>
    </isoform>
</comment>
<comment type="tissue specificity">
    <text evidence="12">Skeletal muscle and heart.</text>
</comment>
<comment type="domain">
    <text>The CBM21 domain is known to be involved in the localization to glycogen and is characteristic of some regulatory subunit of phosphatase complexes.</text>
</comment>
<comment type="PTM">
    <text evidence="1">Phosphorylation at Ser-46 by ISPK stimulates the dephosphorylation of glycogen synthase and phosphorylase kinase.</text>
</comment>
<comment type="disease" evidence="11">
    <disease id="DI-02060">
        <name>Type 2 diabetes mellitus</name>
        <acronym>T2D</acronym>
        <description>A multifactorial disorder of glucose homeostasis caused by a lack of sensitivity to insulin. Affected individuals usually have an obese body habitus and manifestations of a metabolic syndrome characterized by diabetes, insulin resistance, hypertension and hypertriglyceridemia. The disease results in long-term complications that affect the eyes, kidneys, nerves, and blood vessels.</description>
        <dbReference type="MIM" id="125853"/>
    </disease>
    <text>Disease susceptibility is associated with variants affecting the gene represented in this entry.</text>
</comment>
<comment type="miscellaneous">
    <molecule>Isoform 2</molecule>
    <text evidence="14">May be produced at very low levels due to a premature stop codon in the mRNA, leading to nonsense-mediated mRNA decay.</text>
</comment>
<comment type="sequence caution" evidence="14">
    <conflict type="erroneous gene model prediction">
        <sequence resource="EMBL-CDS" id="AAS07492"/>
    </conflict>
</comment>
<sequence>MEPSEVPSQISKDNFLEVPNLSDSLCEDEEVTFQPGFSPQPSRRGSDSSEDIYLDTPSSGTRRVSFADSFGFNLVSVKEFDCWELPSASTTFDLGTDIFHTEEYVLAPLFDLPSSKEDLMQQLQIQKAILESTESLLGSTSIKGIIRVLNVSFEKLVYVRMSLDDWQTHYDILAEYVPNSCDGETDQFSFKIVLVPPYQKDGSKVEFCIRYETSVGTFWSNNNGTNYTFICQKKEQEPEPVKPWKEVPNRQIKGCLKVKSSKEESSVTSEENNFENPKNTDTYIPTIICSHEDKEDLEASNRNVKDVNREHDEHNEKELELMINQHLIRTRSTASRDERNTFSTDPVNFPNKAEGLEKKQIHGEICTDLFQRSLSPSSSAESSVKGDFYCNEKYSSGDDCTHQPSEETTSNMGEIKPSLGDTSSDELVQLHTGSKEVLDDNANPAHGNGTVQIPCPSSDQLMAGNLNKKHEGGAKNIEVKDLGCLRRDFHSDTSACLKESTEEGSSKEDYYGNGKDDEEQRIYLGVNEKQRKNFQTILHDQERKMGNPKISVAGIGASNRDLATLLSEHTAIPTRAITADVSHSPRTNLSWEEAVLTPEHHHLTSEGSALGGITGQVCSSRTGNVLRNDYLFQVEEKSGGINSEDQDNSPQHKQSWNVLESQGKSRENKTNITEHIKGQTDCEDVWGKRDNTRSLKATTEELFTCQETVCCELSSLADHGITEKAEAGTAYIIKTTSESTPESMSAREKAIIAKLPQETARSDRPIEVKETAFDPHEGRNDDSHYTLCQRDTVGVIYDNDFEKESRLGICNVRVDEMEKEETMSMYNPRKTHDREKCGTGNITSVEESSWVITEYQKATSKLDLQLGMLPTDKTVFSENRDLRQVQELSKKTDSDAIVHSAFNSDTNRAPQNSSPFSKHHTEISVSTNEQAIAVENAVTTMASQPISTKSENICNSTREIQGIEKHPYPESKPEEVSRSSGIVTSGSRKERCIGQIFQTEEYSVEKSLGPMILINKPLENMEEARHENEGLVSSGQSLYTSGEKESDSSASTSLPVEESQAQGNESLFSKYTNSKIPYFLLFLIFLITVYHYDLMIGLTFYVLSLSWLSWEEGRQKESVKKK</sequence>
<evidence type="ECO:0000250" key="1"/>
<evidence type="ECO:0000250" key="2">
    <source>
        <dbReference type="UniProtKB" id="Q00756"/>
    </source>
</evidence>
<evidence type="ECO:0000250" key="3">
    <source>
        <dbReference type="UniProtKB" id="Q99MR9"/>
    </source>
</evidence>
<evidence type="ECO:0000255" key="4"/>
<evidence type="ECO:0000255" key="5">
    <source>
        <dbReference type="PROSITE-ProRule" id="PRU00491"/>
    </source>
</evidence>
<evidence type="ECO:0000256" key="6">
    <source>
        <dbReference type="SAM" id="MobiDB-lite"/>
    </source>
</evidence>
<evidence type="ECO:0000269" key="7">
    <source>
    </source>
</evidence>
<evidence type="ECO:0000269" key="8">
    <source>
    </source>
</evidence>
<evidence type="ECO:0000269" key="9">
    <source>
    </source>
</evidence>
<evidence type="ECO:0000269" key="10">
    <source>
    </source>
</evidence>
<evidence type="ECO:0000269" key="11">
    <source>
    </source>
</evidence>
<evidence type="ECO:0000269" key="12">
    <source>
    </source>
</evidence>
<evidence type="ECO:0000303" key="13">
    <source>
    </source>
</evidence>
<evidence type="ECO:0000305" key="14"/>
<evidence type="ECO:0007829" key="15">
    <source>
        <dbReference type="PDB" id="5ZQV"/>
    </source>
</evidence>
<protein>
    <recommendedName>
        <fullName>Protein phosphatase 1 regulatory subunit 3A</fullName>
    </recommendedName>
    <alternativeName>
        <fullName>Protein phosphatase 1 glycogen-associated regulatory subunit</fullName>
    </alternativeName>
    <alternativeName>
        <fullName>Protein phosphatase type-1 glycogen targeting subunit</fullName>
        <shortName>RG1</shortName>
    </alternativeName>
</protein>
<dbReference type="EMBL" id="AF024578">
    <property type="protein sequence ID" value="AAB94596.1"/>
    <property type="molecule type" value="Genomic_DNA"/>
</dbReference>
<dbReference type="EMBL" id="AF024576">
    <property type="protein sequence ID" value="AAB94596.1"/>
    <property type="status" value="JOINED"/>
    <property type="molecule type" value="Genomic_DNA"/>
</dbReference>
<dbReference type="EMBL" id="AF024577">
    <property type="protein sequence ID" value="AAB94596.1"/>
    <property type="status" value="JOINED"/>
    <property type="molecule type" value="Genomic_DNA"/>
</dbReference>
<dbReference type="EMBL" id="AF024579">
    <property type="protein sequence ID" value="AAB94597.1"/>
    <property type="molecule type" value="mRNA"/>
</dbReference>
<dbReference type="EMBL" id="AC092465">
    <property type="protein sequence ID" value="AAS07492.1"/>
    <property type="status" value="ALT_SEQ"/>
    <property type="molecule type" value="Genomic_DNA"/>
</dbReference>
<dbReference type="EMBL" id="AC093598">
    <property type="protein sequence ID" value="AAP22361.1"/>
    <property type="molecule type" value="Genomic_DNA"/>
</dbReference>
<dbReference type="EMBL" id="CH236947">
    <property type="protein sequence ID" value="EAL24370.1"/>
    <property type="molecule type" value="Genomic_DNA"/>
</dbReference>
<dbReference type="EMBL" id="BC126451">
    <property type="protein sequence ID" value="AAI26452.1"/>
    <property type="molecule type" value="mRNA"/>
</dbReference>
<dbReference type="EMBL" id="BC126453">
    <property type="protein sequence ID" value="AAI26454.1"/>
    <property type="molecule type" value="mRNA"/>
</dbReference>
<dbReference type="EMBL" id="X78578">
    <property type="protein sequence ID" value="CAA55316.1"/>
    <property type="molecule type" value="mRNA"/>
</dbReference>
<dbReference type="CCDS" id="CCDS5759.1">
    <molecule id="Q16821-1"/>
</dbReference>
<dbReference type="PIR" id="I38127">
    <property type="entry name" value="I38127"/>
</dbReference>
<dbReference type="RefSeq" id="NP_002702.2">
    <molecule id="Q16821-1"/>
    <property type="nucleotide sequence ID" value="NM_002711.4"/>
</dbReference>
<dbReference type="PDB" id="5ZQV">
    <property type="method" value="X-ray"/>
    <property type="resolution" value="2.95 A"/>
    <property type="chains" value="E/F/G/H=1-99"/>
</dbReference>
<dbReference type="PDBsum" id="5ZQV"/>
<dbReference type="SMR" id="Q16821"/>
<dbReference type="BioGRID" id="111499">
    <property type="interactions" value="53"/>
</dbReference>
<dbReference type="FunCoup" id="Q16821">
    <property type="interactions" value="194"/>
</dbReference>
<dbReference type="IntAct" id="Q16821">
    <property type="interactions" value="2"/>
</dbReference>
<dbReference type="STRING" id="9606.ENSP00000284601"/>
<dbReference type="CAZy" id="CBM21">
    <property type="family name" value="Carbohydrate-Binding Module Family 21"/>
</dbReference>
<dbReference type="GlyGen" id="Q16821">
    <property type="glycosylation" value="1 site, 1 O-linked glycan (1 site)"/>
</dbReference>
<dbReference type="iPTMnet" id="Q16821"/>
<dbReference type="PhosphoSitePlus" id="Q16821"/>
<dbReference type="BioMuta" id="PPP1R3A"/>
<dbReference type="DMDM" id="298286906"/>
<dbReference type="MassIVE" id="Q16821"/>
<dbReference type="PaxDb" id="9606-ENSP00000284601"/>
<dbReference type="PeptideAtlas" id="Q16821"/>
<dbReference type="ProteomicsDB" id="61080">
    <molecule id="Q16821-1"/>
</dbReference>
<dbReference type="ProteomicsDB" id="61081">
    <molecule id="Q16821-2"/>
</dbReference>
<dbReference type="Antibodypedia" id="45888">
    <property type="antibodies" value="140 antibodies from 24 providers"/>
</dbReference>
<dbReference type="DNASU" id="5506"/>
<dbReference type="Ensembl" id="ENST00000284601.4">
    <molecule id="Q16821-1"/>
    <property type="protein sequence ID" value="ENSP00000284601.3"/>
    <property type="gene ID" value="ENSG00000154415.8"/>
</dbReference>
<dbReference type="Ensembl" id="ENST00000284602.1">
    <molecule id="Q16821-2"/>
    <property type="protein sequence ID" value="ENSP00000284602.1"/>
    <property type="gene ID" value="ENSG00000154415.8"/>
</dbReference>
<dbReference type="GeneID" id="5506"/>
<dbReference type="KEGG" id="hsa:5506"/>
<dbReference type="MANE-Select" id="ENST00000284601.4">
    <property type="protein sequence ID" value="ENSP00000284601.3"/>
    <property type="RefSeq nucleotide sequence ID" value="NM_002711.4"/>
    <property type="RefSeq protein sequence ID" value="NP_002702.2"/>
</dbReference>
<dbReference type="UCSC" id="uc010ljy.2">
    <molecule id="Q16821-1"/>
    <property type="organism name" value="human"/>
</dbReference>
<dbReference type="AGR" id="HGNC:9291"/>
<dbReference type="CTD" id="5506"/>
<dbReference type="DisGeNET" id="5506"/>
<dbReference type="GeneCards" id="PPP1R3A"/>
<dbReference type="HGNC" id="HGNC:9291">
    <property type="gene designation" value="PPP1R3A"/>
</dbReference>
<dbReference type="HPA" id="ENSG00000154415">
    <property type="expression patterns" value="Group enriched (heart muscle, skeletal muscle, tongue)"/>
</dbReference>
<dbReference type="MalaCards" id="PPP1R3A"/>
<dbReference type="MIM" id="125853">
    <property type="type" value="phenotype"/>
</dbReference>
<dbReference type="MIM" id="600917">
    <property type="type" value="gene"/>
</dbReference>
<dbReference type="neXtProt" id="NX_Q16821"/>
<dbReference type="OpenTargets" id="ENSG00000154415"/>
<dbReference type="PharmGKB" id="PA33651"/>
<dbReference type="VEuPathDB" id="HostDB:ENSG00000154415"/>
<dbReference type="eggNOG" id="KOG3986">
    <property type="taxonomic scope" value="Eukaryota"/>
</dbReference>
<dbReference type="GeneTree" id="ENSGT00940000157682"/>
<dbReference type="HOGENOM" id="CLU_009399_0_0_1"/>
<dbReference type="InParanoid" id="Q16821"/>
<dbReference type="OMA" id="DCWELPS"/>
<dbReference type="OrthoDB" id="1881at2759"/>
<dbReference type="PAN-GO" id="Q16821">
    <property type="GO annotations" value="4 GO annotations based on evolutionary models"/>
</dbReference>
<dbReference type="PhylomeDB" id="Q16821"/>
<dbReference type="TreeFam" id="TF105537"/>
<dbReference type="PathwayCommons" id="Q16821"/>
<dbReference type="SignaLink" id="Q16821"/>
<dbReference type="SIGNOR" id="Q16821"/>
<dbReference type="BioGRID-ORCS" id="5506">
    <property type="hits" value="14 hits in 1149 CRISPR screens"/>
</dbReference>
<dbReference type="ChiTaRS" id="PPP1R3A">
    <property type="organism name" value="human"/>
</dbReference>
<dbReference type="GeneWiki" id="PPP1R3A"/>
<dbReference type="GenomeRNAi" id="5506"/>
<dbReference type="Pharos" id="Q16821">
    <property type="development level" value="Tbio"/>
</dbReference>
<dbReference type="PRO" id="PR:Q16821"/>
<dbReference type="Proteomes" id="UP000005640">
    <property type="component" value="Chromosome 7"/>
</dbReference>
<dbReference type="RNAct" id="Q16821">
    <property type="molecule type" value="protein"/>
</dbReference>
<dbReference type="Bgee" id="ENSG00000154415">
    <property type="expression patterns" value="Expressed in skeletal muscle tissue of rectus abdominis and 66 other cell types or tissues"/>
</dbReference>
<dbReference type="ExpressionAtlas" id="Q16821">
    <property type="expression patterns" value="baseline and differential"/>
</dbReference>
<dbReference type="GO" id="GO:0016020">
    <property type="term" value="C:membrane"/>
    <property type="evidence" value="ECO:0007669"/>
    <property type="project" value="UniProtKB-SubCell"/>
</dbReference>
<dbReference type="GO" id="GO:0000164">
    <property type="term" value="C:protein phosphatase type 1 complex"/>
    <property type="evidence" value="ECO:0000318"/>
    <property type="project" value="GO_Central"/>
</dbReference>
<dbReference type="GO" id="GO:2001069">
    <property type="term" value="F:glycogen binding"/>
    <property type="evidence" value="ECO:0000318"/>
    <property type="project" value="GO_Central"/>
</dbReference>
<dbReference type="GO" id="GO:0008157">
    <property type="term" value="F:protein phosphatase 1 binding"/>
    <property type="evidence" value="ECO:0000318"/>
    <property type="project" value="GO_Central"/>
</dbReference>
<dbReference type="GO" id="GO:0005977">
    <property type="term" value="P:glycogen metabolic process"/>
    <property type="evidence" value="ECO:0007669"/>
    <property type="project" value="UniProtKB-KW"/>
</dbReference>
<dbReference type="GO" id="GO:0005979">
    <property type="term" value="P:regulation of glycogen biosynthetic process"/>
    <property type="evidence" value="ECO:0000318"/>
    <property type="project" value="GO_Central"/>
</dbReference>
<dbReference type="CDD" id="cd22255">
    <property type="entry name" value="PBD_PPP1R3A"/>
    <property type="match status" value="1"/>
</dbReference>
<dbReference type="DisProt" id="DP03013"/>
<dbReference type="FunFam" id="2.60.40.2440:FF:000004">
    <property type="entry name" value="protein phosphatase 1 regulatory subunit 3A"/>
    <property type="match status" value="1"/>
</dbReference>
<dbReference type="Gene3D" id="2.60.40.2440">
    <property type="entry name" value="Carbohydrate binding type-21 domain"/>
    <property type="match status" value="1"/>
</dbReference>
<dbReference type="InterPro" id="IPR005036">
    <property type="entry name" value="CBM21_dom"/>
</dbReference>
<dbReference type="InterPro" id="IPR038175">
    <property type="entry name" value="CBM21_dom_sf"/>
</dbReference>
<dbReference type="InterPro" id="IPR050782">
    <property type="entry name" value="PP1_regulatory_subunit_3"/>
</dbReference>
<dbReference type="PANTHER" id="PTHR12307">
    <property type="entry name" value="PROTEIN PHOSPHATASE 1 REGULATORY SUBUNIT"/>
    <property type="match status" value="1"/>
</dbReference>
<dbReference type="PANTHER" id="PTHR12307:SF2">
    <property type="entry name" value="PROTEIN PHOSPHATASE 1 REGULATORY SUBUNIT 3A"/>
    <property type="match status" value="1"/>
</dbReference>
<dbReference type="Pfam" id="PF03370">
    <property type="entry name" value="CBM_21"/>
    <property type="match status" value="1"/>
</dbReference>
<dbReference type="PROSITE" id="PS51159">
    <property type="entry name" value="CBM21"/>
    <property type="match status" value="1"/>
</dbReference>
<proteinExistence type="evidence at protein level"/>
<gene>
    <name type="primary">PPP1R3A</name>
    <name type="synonym">PP1G</name>
</gene>
<organism>
    <name type="scientific">Homo sapiens</name>
    <name type="common">Human</name>
    <dbReference type="NCBI Taxonomy" id="9606"/>
    <lineage>
        <taxon>Eukaryota</taxon>
        <taxon>Metazoa</taxon>
        <taxon>Chordata</taxon>
        <taxon>Craniata</taxon>
        <taxon>Vertebrata</taxon>
        <taxon>Euteleostomi</taxon>
        <taxon>Mammalia</taxon>
        <taxon>Eutheria</taxon>
        <taxon>Euarchontoglires</taxon>
        <taxon>Primates</taxon>
        <taxon>Haplorrhini</taxon>
        <taxon>Catarrhini</taxon>
        <taxon>Hominidae</taxon>
        <taxon>Homo</taxon>
    </lineage>
</organism>